<feature type="chain" id="PRO_0000037154" description="Membrane protein">
    <location>
        <begin position="1"/>
        <end position="262"/>
    </location>
</feature>
<feature type="topological domain" description="Virion surface" evidence="1">
    <location>
        <begin position="18"/>
        <end position="47"/>
    </location>
</feature>
<feature type="transmembrane region" description="Helical" evidence="1">
    <location>
        <begin position="48"/>
        <end position="68"/>
    </location>
</feature>
<feature type="topological domain" description="Intravirion" evidence="1">
    <location>
        <begin position="69"/>
        <end position="77"/>
    </location>
</feature>
<feature type="transmembrane region" description="Helical" evidence="1">
    <location>
        <begin position="78"/>
        <end position="98"/>
    </location>
</feature>
<feature type="topological domain" description="Virion surface" evidence="1">
    <location>
        <begin position="99"/>
        <end position="112"/>
    </location>
</feature>
<feature type="transmembrane region" description="Helical" evidence="1">
    <location>
        <begin position="113"/>
        <end position="133"/>
    </location>
</feature>
<feature type="topological domain" description="Intravirion" evidence="1">
    <location>
        <begin position="134"/>
        <end position="262"/>
    </location>
</feature>
<feature type="region of interest" description="Interaction with N protein" evidence="1">
    <location>
        <begin position="237"/>
        <end position="252"/>
    </location>
</feature>
<feature type="glycosylation site" description="N-linked (GlcNAc...) asparagine; by host">
    <location>
        <position position="32"/>
    </location>
</feature>
<gene>
    <name evidence="1" type="primary">M</name>
    <name type="ORF">5</name>
</gene>
<proteinExistence type="evidence at protein level"/>
<organismHost>
    <name type="scientific">Sus scrofa</name>
    <name type="common">Pig</name>
    <dbReference type="NCBI Taxonomy" id="9823"/>
</organismHost>
<dbReference type="EMBL" id="Y00560">
    <property type="protein sequence ID" value="CAA68643.1"/>
    <property type="molecule type" value="Genomic_RNA"/>
</dbReference>
<dbReference type="PIR" id="S01914">
    <property type="entry name" value="S01914"/>
</dbReference>
<dbReference type="SMR" id="P09175"/>
<dbReference type="GlyCosmos" id="P09175">
    <property type="glycosylation" value="1 site, No reported glycans"/>
</dbReference>
<dbReference type="GO" id="GO:0044178">
    <property type="term" value="C:host cell Golgi membrane"/>
    <property type="evidence" value="ECO:0007669"/>
    <property type="project" value="UniProtKB-SubCell"/>
</dbReference>
<dbReference type="GO" id="GO:0016020">
    <property type="term" value="C:membrane"/>
    <property type="evidence" value="ECO:0007669"/>
    <property type="project" value="UniProtKB-UniRule"/>
</dbReference>
<dbReference type="GO" id="GO:0019031">
    <property type="term" value="C:viral envelope"/>
    <property type="evidence" value="ECO:0007669"/>
    <property type="project" value="UniProtKB-UniRule"/>
</dbReference>
<dbReference type="GO" id="GO:0055036">
    <property type="term" value="C:virion membrane"/>
    <property type="evidence" value="ECO:0007669"/>
    <property type="project" value="UniProtKB-SubCell"/>
</dbReference>
<dbReference type="GO" id="GO:0039660">
    <property type="term" value="F:structural constituent of virion"/>
    <property type="evidence" value="ECO:0007669"/>
    <property type="project" value="UniProtKB-UniRule"/>
</dbReference>
<dbReference type="CDD" id="cd21564">
    <property type="entry name" value="alphaCoV_M"/>
    <property type="match status" value="1"/>
</dbReference>
<dbReference type="HAMAP" id="MF_04201">
    <property type="entry name" value="ALPHA_CORONA_M"/>
    <property type="match status" value="1"/>
</dbReference>
<dbReference type="InterPro" id="IPR042551">
    <property type="entry name" value="ALPHA_CORONA_M"/>
</dbReference>
<dbReference type="InterPro" id="IPR002574">
    <property type="entry name" value="M_CoV"/>
</dbReference>
<dbReference type="Pfam" id="PF01635">
    <property type="entry name" value="CoV_M"/>
    <property type="match status" value="1"/>
</dbReference>
<dbReference type="PROSITE" id="PS51927">
    <property type="entry name" value="COV_M"/>
    <property type="match status" value="1"/>
</dbReference>
<reference key="1">
    <citation type="journal article" date="1988" name="Mol. Microbiol.">
        <title>The integral membrane protein from a virulent isolate of transmissible gastroenteritis virus: molecular characterization, sequence and expression in Escherichia coli.</title>
        <authorList>
            <person name="Britton P."/>
            <person name="Carmenes R.S."/>
            <person name="Page K.W."/>
            <person name="Garwes D.J."/>
        </authorList>
    </citation>
    <scope>NUCLEOTIDE SEQUENCE [GENOMIC RNA]</scope>
</reference>
<name>VME1_CVPFS</name>
<comment type="function">
    <text evidence="1 2">Component of the viral envelope that plays a central role in virus morphogenesis and assembly via its interactions with other viral proteins.</text>
</comment>
<comment type="subunit">
    <text evidence="1 2">Homomultimer. Interacts with envelope E protein in the budding compartment of the host cell, which is located between endoplasmic reticulum and the Golgi complex. Forms a complex with HE and S proteins. Interacts with nucleocapsid N protein. This interaction probably participates in RNA packaging into the virus.</text>
</comment>
<comment type="subcellular location">
    <subcellularLocation>
        <location evidence="1">Virion membrane</location>
        <topology evidence="1">Multi-pass membrane protein</topology>
    </subcellularLocation>
    <subcellularLocation>
        <location evidence="1">Host Golgi apparatus membrane</location>
        <topology evidence="1">Multi-pass membrane protein</topology>
    </subcellularLocation>
    <text evidence="1">Largely embedded in the lipid bilayer.</text>
</comment>
<comment type="similarity">
    <text evidence="1">Belongs to the alphacoronaviruses M protein family.</text>
</comment>
<keyword id="KW-0325">Glycoprotein</keyword>
<keyword id="KW-1040">Host Golgi apparatus</keyword>
<keyword id="KW-1043">Host membrane</keyword>
<keyword id="KW-0472">Membrane</keyword>
<keyword id="KW-0812">Transmembrane</keyword>
<keyword id="KW-1133">Transmembrane helix</keyword>
<keyword id="KW-0261">Viral envelope protein</keyword>
<keyword id="KW-0468">Viral matrix protein</keyword>
<keyword id="KW-0946">Virion</keyword>
<accession>P09175</accession>
<organism>
    <name type="scientific">Porcine transmissible gastroenteritis coronavirus (strain FS772/70)</name>
    <name type="common">TGEV</name>
    <dbReference type="NCBI Taxonomy" id="11150"/>
    <lineage>
        <taxon>Viruses</taxon>
        <taxon>Riboviria</taxon>
        <taxon>Orthornavirae</taxon>
        <taxon>Pisuviricota</taxon>
        <taxon>Pisoniviricetes</taxon>
        <taxon>Nidovirales</taxon>
        <taxon>Cornidovirineae</taxon>
        <taxon>Coronaviridae</taxon>
        <taxon>Orthocoronavirinae</taxon>
        <taxon>Alphacoronavirus</taxon>
        <taxon>Tegacovirus</taxon>
        <taxon>Alphacoronavirus 1</taxon>
    </lineage>
</organism>
<evidence type="ECO:0000255" key="1">
    <source>
        <dbReference type="HAMAP-Rule" id="MF_04201"/>
    </source>
</evidence>
<evidence type="ECO:0000255" key="2">
    <source>
        <dbReference type="PROSITE-ProRule" id="PRU01275"/>
    </source>
</evidence>
<sequence>MKLLLILACVIACACGERYCAMKDDTGLSCRNSTASACESCFNGGDLIWHLANWNFSWSIILIIFITVLQYGRPQFSWFVYGIKMLIMWLLWPIVLALTIFNAYSEYQVSRYVMFGVSIAGAIVTFVLWIMYFVRSIQLYRRTKSWWSFNPEINAILCVSALGRSYVLPLEGVPTGVTLTLLSGNLYAEGFKIAGGMNIDNLPKYVMVALPSRTIVYTLVGKKLKASSATGWAYYVKSKAGDYSTDARTDNLSEQEKLLHMV</sequence>
<protein>
    <recommendedName>
        <fullName evidence="1">Membrane protein</fullName>
        <shortName evidence="1">M protein</shortName>
    </recommendedName>
    <alternativeName>
        <fullName evidence="1">E1 glycoprotein</fullName>
    </alternativeName>
    <alternativeName>
        <fullName evidence="1">Matrix glycoprotein</fullName>
    </alternativeName>
    <alternativeName>
        <fullName evidence="1">Membrane glycoprotein</fullName>
    </alternativeName>
</protein>